<proteinExistence type="inferred from homology"/>
<accession>Q0TK13</accession>
<evidence type="ECO:0000255" key="1">
    <source>
        <dbReference type="HAMAP-Rule" id="MF_01241"/>
    </source>
</evidence>
<reference key="1">
    <citation type="journal article" date="2006" name="Mol. Microbiol.">
        <title>Role of pathogenicity island-associated integrases in the genome plasticity of uropathogenic Escherichia coli strain 536.</title>
        <authorList>
            <person name="Hochhut B."/>
            <person name="Wilde C."/>
            <person name="Balling G."/>
            <person name="Middendorf B."/>
            <person name="Dobrindt U."/>
            <person name="Brzuszkiewicz E."/>
            <person name="Gottschalk G."/>
            <person name="Carniel E."/>
            <person name="Hacker J."/>
        </authorList>
    </citation>
    <scope>NUCLEOTIDE SEQUENCE [LARGE SCALE GENOMIC DNA]</scope>
    <source>
        <strain>536 / UPEC</strain>
    </source>
</reference>
<comment type="function">
    <text evidence="1">Catalyzes the reversible isomerization-deamination of glucosamine 6-phosphate (GlcN6P) to form fructose 6-phosphate (Fru6P) and ammonium ion.</text>
</comment>
<comment type="catalytic activity">
    <reaction evidence="1">
        <text>alpha-D-glucosamine 6-phosphate + H2O = beta-D-fructose 6-phosphate + NH4(+)</text>
        <dbReference type="Rhea" id="RHEA:12172"/>
        <dbReference type="ChEBI" id="CHEBI:15377"/>
        <dbReference type="ChEBI" id="CHEBI:28938"/>
        <dbReference type="ChEBI" id="CHEBI:57634"/>
        <dbReference type="ChEBI" id="CHEBI:75989"/>
        <dbReference type="EC" id="3.5.99.6"/>
    </reaction>
</comment>
<comment type="activity regulation">
    <text evidence="1">Allosterically activated by N-acetylglucosamine 6-phosphate (GlcNAc6P).</text>
</comment>
<comment type="pathway">
    <text evidence="1">Amino-sugar metabolism; N-acetylneuraminate degradation; D-fructose 6-phosphate from N-acetylneuraminate: step 5/5.</text>
</comment>
<comment type="subunit">
    <text evidence="1">Homohexamer; trimer of disulfide-linked dimers.</text>
</comment>
<comment type="similarity">
    <text evidence="1">Belongs to the glucosamine/galactosamine-6-phosphate isomerase family. NagB subfamily.</text>
</comment>
<feature type="chain" id="PRO_1000066980" description="Glucosamine-6-phosphate deaminase">
    <location>
        <begin position="1"/>
        <end position="266"/>
    </location>
</feature>
<feature type="active site" description="Proton acceptor; for enolization step" evidence="1">
    <location>
        <position position="72"/>
    </location>
</feature>
<feature type="active site" description="For ring-opening step" evidence="1">
    <location>
        <position position="141"/>
    </location>
</feature>
<feature type="active site" description="Proton acceptor; for ring-opening step" evidence="1">
    <location>
        <position position="143"/>
    </location>
</feature>
<feature type="active site" description="For ring-opening step" evidence="1">
    <location>
        <position position="148"/>
    </location>
</feature>
<feature type="site" description="Part of the allosteric site" evidence="1">
    <location>
        <position position="151"/>
    </location>
</feature>
<feature type="site" description="Part of the allosteric site" evidence="1">
    <location>
        <position position="158"/>
    </location>
</feature>
<feature type="site" description="Part of the allosteric site" evidence="1">
    <location>
        <position position="160"/>
    </location>
</feature>
<feature type="site" description="Part of the allosteric site" evidence="1">
    <location>
        <position position="161"/>
    </location>
</feature>
<feature type="site" description="Part of the allosteric site" evidence="1">
    <location>
        <position position="254"/>
    </location>
</feature>
<feature type="disulfide bond" description="Interchain" evidence="1">
    <location>
        <position position="219"/>
    </location>
</feature>
<sequence>MRLIPLTTAEQVGKWAARHIVNRINAFKPTADRPFVLGLPTGGTPMTTYKALVEMHKAGQVSFKHVVTFNMDEYVGLPKEHPESYYSFMHRNFFDHVDIPAENINLLNGNAPDIDAECRQYEEKIRSYGKIHLFMGGVGNDGHIAFNEPASSLASRTRIKTLTHDTRVANSRFFDNDVNQVPKYALTVGVGTLLDAEEVMILVLGSQKALALQAAVEGCVNHMWTISCLQLHPKAIMVCDEPSTMELKVKTLRYFNELEAENIKGL</sequence>
<keyword id="KW-0021">Allosteric enzyme</keyword>
<keyword id="KW-0119">Carbohydrate metabolism</keyword>
<keyword id="KW-1015">Disulfide bond</keyword>
<keyword id="KW-0378">Hydrolase</keyword>
<protein>
    <recommendedName>
        <fullName evidence="1">Glucosamine-6-phosphate deaminase</fullName>
        <ecNumber evidence="1">3.5.99.6</ecNumber>
    </recommendedName>
    <alternativeName>
        <fullName evidence="1">GlcN6P deaminase</fullName>
        <shortName evidence="1">GNPDA</shortName>
    </alternativeName>
    <alternativeName>
        <fullName evidence="1">Glucosamine-6-phosphate isomerase</fullName>
    </alternativeName>
</protein>
<gene>
    <name evidence="1" type="primary">nagB</name>
    <name type="ordered locus">ECP_0690</name>
</gene>
<organism>
    <name type="scientific">Escherichia coli O6:K15:H31 (strain 536 / UPEC)</name>
    <dbReference type="NCBI Taxonomy" id="362663"/>
    <lineage>
        <taxon>Bacteria</taxon>
        <taxon>Pseudomonadati</taxon>
        <taxon>Pseudomonadota</taxon>
        <taxon>Gammaproteobacteria</taxon>
        <taxon>Enterobacterales</taxon>
        <taxon>Enterobacteriaceae</taxon>
        <taxon>Escherichia</taxon>
    </lineage>
</organism>
<dbReference type="EC" id="3.5.99.6" evidence="1"/>
<dbReference type="EMBL" id="CP000247">
    <property type="protein sequence ID" value="ABG68718.1"/>
    <property type="molecule type" value="Genomic_DNA"/>
</dbReference>
<dbReference type="RefSeq" id="WP_001237072.1">
    <property type="nucleotide sequence ID" value="NC_008253.1"/>
</dbReference>
<dbReference type="SMR" id="Q0TK13"/>
<dbReference type="GeneID" id="93776807"/>
<dbReference type="KEGG" id="ecp:ECP_0690"/>
<dbReference type="HOGENOM" id="CLU_049611_0_1_6"/>
<dbReference type="UniPathway" id="UPA00629">
    <property type="reaction ID" value="UER00684"/>
</dbReference>
<dbReference type="Proteomes" id="UP000009182">
    <property type="component" value="Chromosome"/>
</dbReference>
<dbReference type="GO" id="GO:0005829">
    <property type="term" value="C:cytosol"/>
    <property type="evidence" value="ECO:0007669"/>
    <property type="project" value="TreeGrafter"/>
</dbReference>
<dbReference type="GO" id="GO:0004342">
    <property type="term" value="F:glucosamine-6-phosphate deaminase activity"/>
    <property type="evidence" value="ECO:0007669"/>
    <property type="project" value="UniProtKB-UniRule"/>
</dbReference>
<dbReference type="GO" id="GO:0042802">
    <property type="term" value="F:identical protein binding"/>
    <property type="evidence" value="ECO:0007669"/>
    <property type="project" value="TreeGrafter"/>
</dbReference>
<dbReference type="GO" id="GO:0005975">
    <property type="term" value="P:carbohydrate metabolic process"/>
    <property type="evidence" value="ECO:0007669"/>
    <property type="project" value="InterPro"/>
</dbReference>
<dbReference type="GO" id="GO:0006043">
    <property type="term" value="P:glucosamine catabolic process"/>
    <property type="evidence" value="ECO:0007669"/>
    <property type="project" value="TreeGrafter"/>
</dbReference>
<dbReference type="GO" id="GO:0006046">
    <property type="term" value="P:N-acetylglucosamine catabolic process"/>
    <property type="evidence" value="ECO:0007669"/>
    <property type="project" value="TreeGrafter"/>
</dbReference>
<dbReference type="GO" id="GO:0019262">
    <property type="term" value="P:N-acetylneuraminate catabolic process"/>
    <property type="evidence" value="ECO:0007669"/>
    <property type="project" value="UniProtKB-UniRule"/>
</dbReference>
<dbReference type="CDD" id="cd01399">
    <property type="entry name" value="GlcN6P_deaminase"/>
    <property type="match status" value="1"/>
</dbReference>
<dbReference type="FunFam" id="3.40.50.1360:FF:000002">
    <property type="entry name" value="Glucosamine-6-phosphate deaminase"/>
    <property type="match status" value="1"/>
</dbReference>
<dbReference type="Gene3D" id="3.40.50.1360">
    <property type="match status" value="1"/>
</dbReference>
<dbReference type="HAMAP" id="MF_01241">
    <property type="entry name" value="GlcN6P_deamin"/>
    <property type="match status" value="1"/>
</dbReference>
<dbReference type="InterPro" id="IPR006148">
    <property type="entry name" value="Glc/Gal-6P_isomerase"/>
</dbReference>
<dbReference type="InterPro" id="IPR004547">
    <property type="entry name" value="Glucosamine6P_isomerase"/>
</dbReference>
<dbReference type="InterPro" id="IPR018321">
    <property type="entry name" value="Glucosamine6P_isomerase_CS"/>
</dbReference>
<dbReference type="InterPro" id="IPR037171">
    <property type="entry name" value="NagB/RpiA_transferase-like"/>
</dbReference>
<dbReference type="NCBIfam" id="TIGR00502">
    <property type="entry name" value="nagB"/>
    <property type="match status" value="1"/>
</dbReference>
<dbReference type="NCBIfam" id="NF001685">
    <property type="entry name" value="PRK00443.1-5"/>
    <property type="match status" value="1"/>
</dbReference>
<dbReference type="PANTHER" id="PTHR11280">
    <property type="entry name" value="GLUCOSAMINE-6-PHOSPHATE ISOMERASE"/>
    <property type="match status" value="1"/>
</dbReference>
<dbReference type="PANTHER" id="PTHR11280:SF5">
    <property type="entry name" value="GLUCOSAMINE-6-PHOSPHATE ISOMERASE"/>
    <property type="match status" value="1"/>
</dbReference>
<dbReference type="Pfam" id="PF01182">
    <property type="entry name" value="Glucosamine_iso"/>
    <property type="match status" value="1"/>
</dbReference>
<dbReference type="SUPFAM" id="SSF100950">
    <property type="entry name" value="NagB/RpiA/CoA transferase-like"/>
    <property type="match status" value="1"/>
</dbReference>
<dbReference type="PROSITE" id="PS01161">
    <property type="entry name" value="GLC_GALNAC_ISOMERASE"/>
    <property type="match status" value="1"/>
</dbReference>
<name>NAGB_ECOL5</name>